<sequence>MAVPKFKPSKSRSRTRRSINMRKKIPQFQECSNCGNLAIRHRICAKCGYYRNSQYLELGL</sequence>
<gene>
    <name evidence="1" type="primary">rpmF</name>
    <name type="ordered locus">BRE_708</name>
</gene>
<protein>
    <recommendedName>
        <fullName evidence="1">Large ribosomal subunit protein bL32</fullName>
    </recommendedName>
    <alternativeName>
        <fullName evidence="2">50S ribosomal protein L32</fullName>
    </alternativeName>
</protein>
<accession>B5RQ43</accession>
<evidence type="ECO:0000255" key="1">
    <source>
        <dbReference type="HAMAP-Rule" id="MF_00340"/>
    </source>
</evidence>
<evidence type="ECO:0000305" key="2"/>
<proteinExistence type="inferred from homology"/>
<comment type="similarity">
    <text evidence="1">Belongs to the bacterial ribosomal protein bL32 family.</text>
</comment>
<feature type="chain" id="PRO_1000120095" description="Large ribosomal subunit protein bL32">
    <location>
        <begin position="1"/>
        <end position="60"/>
    </location>
</feature>
<name>RL32_BORRA</name>
<dbReference type="EMBL" id="CP000993">
    <property type="protein sequence ID" value="ACH94927.1"/>
    <property type="molecule type" value="Genomic_DNA"/>
</dbReference>
<dbReference type="RefSeq" id="WP_012538442.1">
    <property type="nucleotide sequence ID" value="NZ_CP169983.1"/>
</dbReference>
<dbReference type="SMR" id="B5RQ43"/>
<dbReference type="KEGG" id="bre:BRE_708"/>
<dbReference type="HOGENOM" id="CLU_129084_1_0_12"/>
<dbReference type="Proteomes" id="UP000000612">
    <property type="component" value="Chromosome"/>
</dbReference>
<dbReference type="GO" id="GO:0015934">
    <property type="term" value="C:large ribosomal subunit"/>
    <property type="evidence" value="ECO:0007669"/>
    <property type="project" value="InterPro"/>
</dbReference>
<dbReference type="GO" id="GO:0003735">
    <property type="term" value="F:structural constituent of ribosome"/>
    <property type="evidence" value="ECO:0007669"/>
    <property type="project" value="InterPro"/>
</dbReference>
<dbReference type="GO" id="GO:0006412">
    <property type="term" value="P:translation"/>
    <property type="evidence" value="ECO:0007669"/>
    <property type="project" value="UniProtKB-UniRule"/>
</dbReference>
<dbReference type="HAMAP" id="MF_00340">
    <property type="entry name" value="Ribosomal_bL32"/>
    <property type="match status" value="1"/>
</dbReference>
<dbReference type="InterPro" id="IPR002677">
    <property type="entry name" value="Ribosomal_bL32"/>
</dbReference>
<dbReference type="InterPro" id="IPR044957">
    <property type="entry name" value="Ribosomal_bL32_bact"/>
</dbReference>
<dbReference type="InterPro" id="IPR011332">
    <property type="entry name" value="Ribosomal_zn-bd"/>
</dbReference>
<dbReference type="NCBIfam" id="TIGR01031">
    <property type="entry name" value="rpmF_bact"/>
    <property type="match status" value="1"/>
</dbReference>
<dbReference type="PANTHER" id="PTHR35534">
    <property type="entry name" value="50S RIBOSOMAL PROTEIN L32"/>
    <property type="match status" value="1"/>
</dbReference>
<dbReference type="PANTHER" id="PTHR35534:SF1">
    <property type="entry name" value="LARGE RIBOSOMAL SUBUNIT PROTEIN BL32"/>
    <property type="match status" value="1"/>
</dbReference>
<dbReference type="Pfam" id="PF01783">
    <property type="entry name" value="Ribosomal_L32p"/>
    <property type="match status" value="1"/>
</dbReference>
<dbReference type="SUPFAM" id="SSF57829">
    <property type="entry name" value="Zn-binding ribosomal proteins"/>
    <property type="match status" value="1"/>
</dbReference>
<organism>
    <name type="scientific">Borrelia recurrentis (strain A1)</name>
    <dbReference type="NCBI Taxonomy" id="412418"/>
    <lineage>
        <taxon>Bacteria</taxon>
        <taxon>Pseudomonadati</taxon>
        <taxon>Spirochaetota</taxon>
        <taxon>Spirochaetia</taxon>
        <taxon>Spirochaetales</taxon>
        <taxon>Borreliaceae</taxon>
        <taxon>Borrelia</taxon>
    </lineage>
</organism>
<reference key="1">
    <citation type="journal article" date="2008" name="PLoS Genet.">
        <title>The genome of Borrelia recurrentis, the agent of deadly louse-borne relapsing fever, is a degraded subset of tick-borne Borrelia duttonii.</title>
        <authorList>
            <person name="Lescot M."/>
            <person name="Audic S."/>
            <person name="Robert C."/>
            <person name="Nguyen T.T."/>
            <person name="Blanc G."/>
            <person name="Cutler S.J."/>
            <person name="Wincker P."/>
            <person name="Couloux A."/>
            <person name="Claverie J.-M."/>
            <person name="Raoult D."/>
            <person name="Drancourt M."/>
        </authorList>
    </citation>
    <scope>NUCLEOTIDE SEQUENCE [LARGE SCALE GENOMIC DNA]</scope>
    <source>
        <strain>A1</strain>
    </source>
</reference>
<keyword id="KW-0687">Ribonucleoprotein</keyword>
<keyword id="KW-0689">Ribosomal protein</keyword>